<dbReference type="EMBL" id="AP008232">
    <property type="protein sequence ID" value="BAE75440.1"/>
    <property type="molecule type" value="Genomic_DNA"/>
</dbReference>
<dbReference type="RefSeq" id="WP_011411977.1">
    <property type="nucleotide sequence ID" value="NC_007712.1"/>
</dbReference>
<dbReference type="SMR" id="Q2NQY5"/>
<dbReference type="STRING" id="343509.SG2165"/>
<dbReference type="KEGG" id="sgl:SG2165"/>
<dbReference type="eggNOG" id="COG0254">
    <property type="taxonomic scope" value="Bacteria"/>
</dbReference>
<dbReference type="HOGENOM" id="CLU_114306_4_3_6"/>
<dbReference type="OrthoDB" id="9803251at2"/>
<dbReference type="Proteomes" id="UP000001932">
    <property type="component" value="Chromosome"/>
</dbReference>
<dbReference type="GO" id="GO:1990904">
    <property type="term" value="C:ribonucleoprotein complex"/>
    <property type="evidence" value="ECO:0007669"/>
    <property type="project" value="UniProtKB-KW"/>
</dbReference>
<dbReference type="GO" id="GO:0005840">
    <property type="term" value="C:ribosome"/>
    <property type="evidence" value="ECO:0007669"/>
    <property type="project" value="UniProtKB-KW"/>
</dbReference>
<dbReference type="GO" id="GO:0046872">
    <property type="term" value="F:metal ion binding"/>
    <property type="evidence" value="ECO:0007669"/>
    <property type="project" value="UniProtKB-KW"/>
</dbReference>
<dbReference type="GO" id="GO:0019843">
    <property type="term" value="F:rRNA binding"/>
    <property type="evidence" value="ECO:0007669"/>
    <property type="project" value="UniProtKB-KW"/>
</dbReference>
<dbReference type="GO" id="GO:0003735">
    <property type="term" value="F:structural constituent of ribosome"/>
    <property type="evidence" value="ECO:0007669"/>
    <property type="project" value="InterPro"/>
</dbReference>
<dbReference type="GO" id="GO:0006412">
    <property type="term" value="P:translation"/>
    <property type="evidence" value="ECO:0007669"/>
    <property type="project" value="UniProtKB-UniRule"/>
</dbReference>
<dbReference type="FunFam" id="4.10.830.30:FF:000001">
    <property type="entry name" value="50S ribosomal protein L31"/>
    <property type="match status" value="1"/>
</dbReference>
<dbReference type="Gene3D" id="4.10.830.30">
    <property type="entry name" value="Ribosomal protein L31"/>
    <property type="match status" value="1"/>
</dbReference>
<dbReference type="HAMAP" id="MF_00501">
    <property type="entry name" value="Ribosomal_bL31_1"/>
    <property type="match status" value="1"/>
</dbReference>
<dbReference type="InterPro" id="IPR034704">
    <property type="entry name" value="Ribosomal_bL28/bL31-like_sf"/>
</dbReference>
<dbReference type="InterPro" id="IPR002150">
    <property type="entry name" value="Ribosomal_bL31"/>
</dbReference>
<dbReference type="InterPro" id="IPR027491">
    <property type="entry name" value="Ribosomal_bL31_A"/>
</dbReference>
<dbReference type="InterPro" id="IPR042105">
    <property type="entry name" value="Ribosomal_bL31_sf"/>
</dbReference>
<dbReference type="NCBIfam" id="TIGR00105">
    <property type="entry name" value="L31"/>
    <property type="match status" value="1"/>
</dbReference>
<dbReference type="NCBIfam" id="NF000612">
    <property type="entry name" value="PRK00019.1"/>
    <property type="match status" value="1"/>
</dbReference>
<dbReference type="NCBIfam" id="NF001809">
    <property type="entry name" value="PRK00528.1"/>
    <property type="match status" value="1"/>
</dbReference>
<dbReference type="PANTHER" id="PTHR33280">
    <property type="entry name" value="50S RIBOSOMAL PROTEIN L31, CHLOROPLASTIC"/>
    <property type="match status" value="1"/>
</dbReference>
<dbReference type="PANTHER" id="PTHR33280:SF6">
    <property type="entry name" value="LARGE RIBOSOMAL SUBUNIT PROTEIN BL31A"/>
    <property type="match status" value="1"/>
</dbReference>
<dbReference type="Pfam" id="PF01197">
    <property type="entry name" value="Ribosomal_L31"/>
    <property type="match status" value="1"/>
</dbReference>
<dbReference type="PRINTS" id="PR01249">
    <property type="entry name" value="RIBOSOMALL31"/>
</dbReference>
<dbReference type="SUPFAM" id="SSF143800">
    <property type="entry name" value="L28p-like"/>
    <property type="match status" value="1"/>
</dbReference>
<dbReference type="PROSITE" id="PS01143">
    <property type="entry name" value="RIBOSOMAL_L31"/>
    <property type="match status" value="1"/>
</dbReference>
<keyword id="KW-0479">Metal-binding</keyword>
<keyword id="KW-0687">Ribonucleoprotein</keyword>
<keyword id="KW-0689">Ribosomal protein</keyword>
<keyword id="KW-0694">RNA-binding</keyword>
<keyword id="KW-0699">rRNA-binding</keyword>
<keyword id="KW-0862">Zinc</keyword>
<evidence type="ECO:0000255" key="1">
    <source>
        <dbReference type="HAMAP-Rule" id="MF_00501"/>
    </source>
</evidence>
<evidence type="ECO:0000305" key="2"/>
<organism>
    <name type="scientific">Sodalis glossinidius (strain morsitans)</name>
    <dbReference type="NCBI Taxonomy" id="343509"/>
    <lineage>
        <taxon>Bacteria</taxon>
        <taxon>Pseudomonadati</taxon>
        <taxon>Pseudomonadota</taxon>
        <taxon>Gammaproteobacteria</taxon>
        <taxon>Enterobacterales</taxon>
        <taxon>Bruguierivoracaceae</taxon>
        <taxon>Sodalis</taxon>
    </lineage>
</organism>
<name>RL31_SODGM</name>
<reference key="1">
    <citation type="journal article" date="2006" name="Genome Res.">
        <title>Massive genome erosion and functional adaptations provide insights into the symbiotic lifestyle of Sodalis glossinidius in the tsetse host.</title>
        <authorList>
            <person name="Toh H."/>
            <person name="Weiss B.L."/>
            <person name="Perkin S.A.H."/>
            <person name="Yamashita A."/>
            <person name="Oshima K."/>
            <person name="Hattori M."/>
            <person name="Aksoy S."/>
        </authorList>
    </citation>
    <scope>NUCLEOTIDE SEQUENCE [LARGE SCALE GENOMIC DNA]</scope>
    <source>
        <strain>morsitans</strain>
    </source>
</reference>
<proteinExistence type="inferred from homology"/>
<gene>
    <name evidence="1" type="primary">rpmE</name>
    <name type="ordered locus">SG2165</name>
</gene>
<protein>
    <recommendedName>
        <fullName evidence="1">Large ribosomal subunit protein bL31</fullName>
    </recommendedName>
    <alternativeName>
        <fullName evidence="2">50S ribosomal protein L31</fullName>
    </alternativeName>
</protein>
<sequence>MQKDIHPNYQEITATCSCGNVIKTRSTVGHDLNLDVCGACHPFYTGKQRVVDTGGRVDRFNKRFSIPVGKK</sequence>
<comment type="function">
    <text evidence="1">Binds the 23S rRNA.</text>
</comment>
<comment type="cofactor">
    <cofactor evidence="1">
        <name>Zn(2+)</name>
        <dbReference type="ChEBI" id="CHEBI:29105"/>
    </cofactor>
    <text evidence="1">Binds 1 zinc ion per subunit.</text>
</comment>
<comment type="subunit">
    <text evidence="1">Part of the 50S ribosomal subunit.</text>
</comment>
<comment type="similarity">
    <text evidence="1">Belongs to the bacterial ribosomal protein bL31 family. Type A subfamily.</text>
</comment>
<feature type="chain" id="PRO_0000259231" description="Large ribosomal subunit protein bL31">
    <location>
        <begin position="1"/>
        <end position="71"/>
    </location>
</feature>
<feature type="binding site" evidence="1">
    <location>
        <position position="16"/>
    </location>
    <ligand>
        <name>Zn(2+)</name>
        <dbReference type="ChEBI" id="CHEBI:29105"/>
    </ligand>
</feature>
<feature type="binding site" evidence="1">
    <location>
        <position position="18"/>
    </location>
    <ligand>
        <name>Zn(2+)</name>
        <dbReference type="ChEBI" id="CHEBI:29105"/>
    </ligand>
</feature>
<feature type="binding site" evidence="1">
    <location>
        <position position="37"/>
    </location>
    <ligand>
        <name>Zn(2+)</name>
        <dbReference type="ChEBI" id="CHEBI:29105"/>
    </ligand>
</feature>
<feature type="binding site" evidence="1">
    <location>
        <position position="40"/>
    </location>
    <ligand>
        <name>Zn(2+)</name>
        <dbReference type="ChEBI" id="CHEBI:29105"/>
    </ligand>
</feature>
<accession>Q2NQY5</accession>